<reference key="1">
    <citation type="journal article" date="2005" name="Mol. Genet. Genomics">
        <title>A fine physical map of the rice chromosome 5.</title>
        <authorList>
            <person name="Cheng C.-H."/>
            <person name="Chung M.C."/>
            <person name="Liu S.-M."/>
            <person name="Chen S.-K."/>
            <person name="Kao F.Y."/>
            <person name="Lin S.-J."/>
            <person name="Hsiao S.-H."/>
            <person name="Tseng I.C."/>
            <person name="Hsing Y.-I.C."/>
            <person name="Wu H.-P."/>
            <person name="Chen C.-S."/>
            <person name="Shaw J.-F."/>
            <person name="Wu J."/>
            <person name="Matsumoto T."/>
            <person name="Sasaki T."/>
            <person name="Chen H.-C."/>
            <person name="Chow T.-Y."/>
        </authorList>
    </citation>
    <scope>NUCLEOTIDE SEQUENCE [LARGE SCALE GENOMIC DNA]</scope>
    <source>
        <strain>cv. Nipponbare</strain>
    </source>
</reference>
<reference key="2">
    <citation type="journal article" date="2005" name="Nature">
        <title>The map-based sequence of the rice genome.</title>
        <authorList>
            <consortium name="International rice genome sequencing project (IRGSP)"/>
        </authorList>
    </citation>
    <scope>NUCLEOTIDE SEQUENCE [LARGE SCALE GENOMIC DNA]</scope>
    <source>
        <strain>cv. Nipponbare</strain>
    </source>
</reference>
<reference key="3">
    <citation type="journal article" date="2008" name="Nucleic Acids Res.">
        <title>The rice annotation project database (RAP-DB): 2008 update.</title>
        <authorList>
            <consortium name="The rice annotation project (RAP)"/>
        </authorList>
    </citation>
    <scope>GENOME REANNOTATION</scope>
    <source>
        <strain>cv. Nipponbare</strain>
    </source>
</reference>
<reference key="4">
    <citation type="journal article" date="2013" name="Rice">
        <title>Improvement of the Oryza sativa Nipponbare reference genome using next generation sequence and optical map data.</title>
        <authorList>
            <person name="Kawahara Y."/>
            <person name="de la Bastide M."/>
            <person name="Hamilton J.P."/>
            <person name="Kanamori H."/>
            <person name="McCombie W.R."/>
            <person name="Ouyang S."/>
            <person name="Schwartz D.C."/>
            <person name="Tanaka T."/>
            <person name="Wu J."/>
            <person name="Zhou S."/>
            <person name="Childs K.L."/>
            <person name="Davidson R.M."/>
            <person name="Lin H."/>
            <person name="Quesada-Ocampo L."/>
            <person name="Vaillancourt B."/>
            <person name="Sakai H."/>
            <person name="Lee S.S."/>
            <person name="Kim J."/>
            <person name="Numa H."/>
            <person name="Itoh T."/>
            <person name="Buell C.R."/>
            <person name="Matsumoto T."/>
        </authorList>
    </citation>
    <scope>GENOME REANNOTATION</scope>
    <source>
        <strain>cv. Nipponbare</strain>
    </source>
</reference>
<reference key="5">
    <citation type="journal article" date="2003" name="Science">
        <title>Collection, mapping, and annotation of over 28,000 cDNA clones from japonica rice.</title>
        <authorList>
            <consortium name="The rice full-length cDNA consortium"/>
        </authorList>
    </citation>
    <scope>NUCLEOTIDE SEQUENCE [LARGE SCALE MRNA]</scope>
    <source>
        <strain>cv. Nipponbare</strain>
    </source>
</reference>
<reference key="6">
    <citation type="journal article" date="2008" name="Plant Physiol.">
        <title>Genomic survey and gene expression analysis of the basic leucine zipper transcription factor family in rice.</title>
        <authorList>
            <person name="Nijhawan A."/>
            <person name="Jain M."/>
            <person name="Tyagi A.K."/>
            <person name="Khurana J.P."/>
        </authorList>
    </citation>
    <scope>GENE FAMILY</scope>
    <scope>NOMENCLATURE</scope>
</reference>
<reference key="7">
    <citation type="journal article" date="2014" name="BMC Genomics">
        <title>Interaction specificity and coexpression of rice NPR1 homologs 1 and 3 (NH1 and NH3), TGA transcription factors and negative regulator of resistance (NRR) proteins.</title>
        <authorList>
            <person name="Chern M."/>
            <person name="Bai W."/>
            <person name="Ruan D."/>
            <person name="Oh T."/>
            <person name="Chen X."/>
            <person name="Ronald P.C."/>
        </authorList>
    </citation>
    <scope>INTERACTION WITH NPR5/NH4; NH5.1 AND NH5.2</scope>
</reference>
<proteinExistence type="evidence at protein level"/>
<organism>
    <name type="scientific">Oryza sativa subsp. japonica</name>
    <name type="common">Rice</name>
    <dbReference type="NCBI Taxonomy" id="39947"/>
    <lineage>
        <taxon>Eukaryota</taxon>
        <taxon>Viridiplantae</taxon>
        <taxon>Streptophyta</taxon>
        <taxon>Embryophyta</taxon>
        <taxon>Tracheophyta</taxon>
        <taxon>Spermatophyta</taxon>
        <taxon>Magnoliopsida</taxon>
        <taxon>Liliopsida</taxon>
        <taxon>Poales</taxon>
        <taxon>Poaceae</taxon>
        <taxon>BOP clade</taxon>
        <taxon>Oryzoideae</taxon>
        <taxon>Oryzeae</taxon>
        <taxon>Oryzinae</taxon>
        <taxon>Oryza</taxon>
        <taxon>Oryza sativa</taxon>
    </lineage>
</organism>
<sequence>MIQSDAYTESAGYLAARPPTLEIFPSWPMSHLQEPYSNSQSVGSTTDSSSAQNTMSQAELVSPASMRSDSGQEQQQQEVLMVTIDDYNYKQGLGAAIATAPSFQQHAGGLDMRKHGSTRKDGKLLDAKTERRLAQNREAARKSRLRKKAYVQQLETSRIRLQQIEQELQRARSQGLFPGGCSAPGDMSSGAVMFDMDYTRWIDDDSKCMAELQGALQAQLPDGNLGAIVEECMRHYDELFHLRAVLASSDVFHLMTGMWAAPAERCFLWMAGFRPSEILKMLIPQLDPLTEQQLMGMCSLQQSSEQTEEALAQGLHQLHQSLADAVGGGPLNDGADVANYTGLMALALGRLENLESFYRQADNLRQETLHHMRRILTTRQTARCFLSIGEYNRRLRALSSLWASRPRENFIATENVSPTGTEFQVIQQSQQNQFSGF</sequence>
<evidence type="ECO:0000250" key="1">
    <source>
        <dbReference type="UniProtKB" id="Q7X993"/>
    </source>
</evidence>
<evidence type="ECO:0000255" key="2">
    <source>
        <dbReference type="PROSITE-ProRule" id="PRU00978"/>
    </source>
</evidence>
<evidence type="ECO:0000255" key="3">
    <source>
        <dbReference type="PROSITE-ProRule" id="PRU01147"/>
    </source>
</evidence>
<evidence type="ECO:0000256" key="4">
    <source>
        <dbReference type="SAM" id="MobiDB-lite"/>
    </source>
</evidence>
<evidence type="ECO:0000269" key="5">
    <source>
    </source>
</evidence>
<evidence type="ECO:0000303" key="6">
    <source>
    </source>
</evidence>
<evidence type="ECO:0000303" key="7">
    <source>
    </source>
</evidence>
<evidence type="ECO:0000305" key="8"/>
<evidence type="ECO:0000312" key="9">
    <source>
        <dbReference type="EMBL" id="AAT69613.1"/>
    </source>
</evidence>
<evidence type="ECO:0000312" key="10">
    <source>
        <dbReference type="EMBL" id="BAS94267.1"/>
    </source>
</evidence>
<name>TGAL5_ORYSJ</name>
<accession>Q6F2N0</accession>
<accession>Q0DHT1</accession>
<comment type="function">
    <text evidence="1">Transcriptional regulator involved in defense response.</text>
</comment>
<comment type="subunit">
    <text evidence="5">Interacts with NPR5/NH4, NH5.1 and NH5.2.</text>
</comment>
<comment type="subcellular location">
    <subcellularLocation>
        <location evidence="2">Nucleus</location>
    </subcellularLocation>
</comment>
<comment type="similarity">
    <text evidence="8">Belongs to the bZIP family.</text>
</comment>
<comment type="sequence caution" evidence="8">
    <conflict type="erroneous gene model prediction">
        <sequence resource="EMBL-CDS" id="BAF17592"/>
    </conflict>
</comment>
<comment type="sequence caution" evidence="8">
    <conflict type="erroneous gene model prediction">
        <sequence resource="EMBL-CDS" id="BAS94267"/>
    </conflict>
</comment>
<protein>
    <recommendedName>
        <fullName evidence="8">Transcription factor TGAL5</fullName>
    </recommendedName>
    <alternativeName>
        <fullName evidence="6">bZIP transcription factor 41</fullName>
        <shortName evidence="6">OsbZIP41</shortName>
    </alternativeName>
</protein>
<feature type="chain" id="PRO_0000437019" description="Transcription factor TGAL5">
    <location>
        <begin position="1"/>
        <end position="437"/>
    </location>
</feature>
<feature type="domain" description="bZIP" evidence="2">
    <location>
        <begin position="126"/>
        <end position="170"/>
    </location>
</feature>
<feature type="domain" description="DOG1" evidence="3">
    <location>
        <begin position="191"/>
        <end position="405"/>
    </location>
</feature>
<feature type="region of interest" description="Disordered" evidence="4">
    <location>
        <begin position="33"/>
        <end position="75"/>
    </location>
</feature>
<feature type="region of interest" description="Basic motif" evidence="2">
    <location>
        <begin position="128"/>
        <end position="148"/>
    </location>
</feature>
<feature type="region of interest" description="Leucine-zipper" evidence="2">
    <location>
        <begin position="154"/>
        <end position="168"/>
    </location>
</feature>
<feature type="compositionally biased region" description="Low complexity" evidence="4">
    <location>
        <begin position="37"/>
        <end position="50"/>
    </location>
</feature>
<feature type="compositionally biased region" description="Polar residues" evidence="4">
    <location>
        <begin position="51"/>
        <end position="75"/>
    </location>
</feature>
<keyword id="KW-0238">DNA-binding</keyword>
<keyword id="KW-0539">Nucleus</keyword>
<keyword id="KW-0611">Plant defense</keyword>
<keyword id="KW-1185">Reference proteome</keyword>
<keyword id="KW-0804">Transcription</keyword>
<keyword id="KW-0805">Transcription regulation</keyword>
<gene>
    <name evidence="7" type="primary">TGAL5</name>
    <name evidence="10" type="ordered locus">Os05g0443900</name>
    <name evidence="8" type="ordered locus">LOC_Os05g37170</name>
    <name evidence="9" type="ORF">OSJNBa0020H14.17</name>
</gene>
<dbReference type="EMBL" id="AC137611">
    <property type="protein sequence ID" value="AAT69613.1"/>
    <property type="molecule type" value="Genomic_DNA"/>
</dbReference>
<dbReference type="EMBL" id="AP008211">
    <property type="protein sequence ID" value="BAF17592.1"/>
    <property type="status" value="ALT_SEQ"/>
    <property type="molecule type" value="Genomic_DNA"/>
</dbReference>
<dbReference type="EMBL" id="AP014961">
    <property type="protein sequence ID" value="BAS94267.1"/>
    <property type="status" value="ALT_SEQ"/>
    <property type="molecule type" value="Genomic_DNA"/>
</dbReference>
<dbReference type="EMBL" id="AK109520">
    <property type="protein sequence ID" value="BAG98786.1"/>
    <property type="molecule type" value="mRNA"/>
</dbReference>
<dbReference type="RefSeq" id="XP_015639069.1">
    <property type="nucleotide sequence ID" value="XM_015783583.1"/>
</dbReference>
<dbReference type="RefSeq" id="XP_015639070.1">
    <property type="nucleotide sequence ID" value="XM_015783584.1"/>
</dbReference>
<dbReference type="SMR" id="Q6F2N0"/>
<dbReference type="FunCoup" id="Q6F2N0">
    <property type="interactions" value="2"/>
</dbReference>
<dbReference type="STRING" id="39947.Q6F2N0"/>
<dbReference type="PaxDb" id="39947-Q6F2N0"/>
<dbReference type="EnsemblPlants" id="Os05t0443900-01">
    <property type="protein sequence ID" value="Os05t0443900-01"/>
    <property type="gene ID" value="Os05g0443900"/>
</dbReference>
<dbReference type="GeneID" id="4338933"/>
<dbReference type="Gramene" id="Os05t0443900-01">
    <property type="protein sequence ID" value="Os05t0443900-01"/>
    <property type="gene ID" value="Os05g0443900"/>
</dbReference>
<dbReference type="KEGG" id="dosa:Os05g0443900"/>
<dbReference type="KEGG" id="osa:4338933"/>
<dbReference type="eggNOG" id="ENOG502QRFK">
    <property type="taxonomic scope" value="Eukaryota"/>
</dbReference>
<dbReference type="InParanoid" id="Q6F2N0"/>
<dbReference type="OrthoDB" id="2015618at2759"/>
<dbReference type="PlantReactome" id="R-OSA-6788019">
    <property type="pathway name" value="Salicylic acid signaling"/>
</dbReference>
<dbReference type="Proteomes" id="UP000000763">
    <property type="component" value="Chromosome 5"/>
</dbReference>
<dbReference type="Proteomes" id="UP000059680">
    <property type="component" value="Chromosome 5"/>
</dbReference>
<dbReference type="GO" id="GO:0005634">
    <property type="term" value="C:nucleus"/>
    <property type="evidence" value="ECO:0007669"/>
    <property type="project" value="UniProtKB-SubCell"/>
</dbReference>
<dbReference type="GO" id="GO:0003700">
    <property type="term" value="F:DNA-binding transcription factor activity"/>
    <property type="evidence" value="ECO:0007669"/>
    <property type="project" value="InterPro"/>
</dbReference>
<dbReference type="GO" id="GO:0043565">
    <property type="term" value="F:sequence-specific DNA binding"/>
    <property type="evidence" value="ECO:0007669"/>
    <property type="project" value="InterPro"/>
</dbReference>
<dbReference type="GO" id="GO:0006952">
    <property type="term" value="P:defense response"/>
    <property type="evidence" value="ECO:0007669"/>
    <property type="project" value="UniProtKB-KW"/>
</dbReference>
<dbReference type="GO" id="GO:0006351">
    <property type="term" value="P:DNA-templated transcription"/>
    <property type="evidence" value="ECO:0007669"/>
    <property type="project" value="InterPro"/>
</dbReference>
<dbReference type="FunFam" id="1.20.5.170:FF:000019">
    <property type="entry name" value="BZIP family transcription factor"/>
    <property type="match status" value="1"/>
</dbReference>
<dbReference type="Gene3D" id="1.20.5.170">
    <property type="match status" value="1"/>
</dbReference>
<dbReference type="InterPro" id="IPR004827">
    <property type="entry name" value="bZIP"/>
</dbReference>
<dbReference type="InterPro" id="IPR046347">
    <property type="entry name" value="bZIP_sf"/>
</dbReference>
<dbReference type="InterPro" id="IPR025422">
    <property type="entry name" value="TGA_domain"/>
</dbReference>
<dbReference type="PANTHER" id="PTHR45693">
    <property type="entry name" value="TRANSCRIPTION FACTOR TGA9"/>
    <property type="match status" value="1"/>
</dbReference>
<dbReference type="PANTHER" id="PTHR45693:SF16">
    <property type="entry name" value="TRANSCRIPTION FACTOR TGAL5"/>
    <property type="match status" value="1"/>
</dbReference>
<dbReference type="Pfam" id="PF00170">
    <property type="entry name" value="bZIP_1"/>
    <property type="match status" value="1"/>
</dbReference>
<dbReference type="Pfam" id="PF14144">
    <property type="entry name" value="DOG1"/>
    <property type="match status" value="1"/>
</dbReference>
<dbReference type="SMART" id="SM00338">
    <property type="entry name" value="BRLZ"/>
    <property type="match status" value="1"/>
</dbReference>
<dbReference type="SUPFAM" id="SSF57959">
    <property type="entry name" value="Leucine zipper domain"/>
    <property type="match status" value="1"/>
</dbReference>
<dbReference type="PROSITE" id="PS50217">
    <property type="entry name" value="BZIP"/>
    <property type="match status" value="1"/>
</dbReference>
<dbReference type="PROSITE" id="PS00036">
    <property type="entry name" value="BZIP_BASIC"/>
    <property type="match status" value="1"/>
</dbReference>
<dbReference type="PROSITE" id="PS51806">
    <property type="entry name" value="DOG1"/>
    <property type="match status" value="1"/>
</dbReference>